<dbReference type="EC" id="3.1.11.6" evidence="1"/>
<dbReference type="EMBL" id="AE014074">
    <property type="protein sequence ID" value="AAM79762.1"/>
    <property type="molecule type" value="Genomic_DNA"/>
</dbReference>
<dbReference type="RefSeq" id="WP_002983901.1">
    <property type="nucleotide sequence ID" value="NC_004070.1"/>
</dbReference>
<dbReference type="SMR" id="P0DH52"/>
<dbReference type="KEGG" id="spg:SpyM3_1155"/>
<dbReference type="HOGENOM" id="CLU_145918_3_2_9"/>
<dbReference type="Proteomes" id="UP000000564">
    <property type="component" value="Chromosome"/>
</dbReference>
<dbReference type="GO" id="GO:0005829">
    <property type="term" value="C:cytosol"/>
    <property type="evidence" value="ECO:0007669"/>
    <property type="project" value="TreeGrafter"/>
</dbReference>
<dbReference type="GO" id="GO:0009318">
    <property type="term" value="C:exodeoxyribonuclease VII complex"/>
    <property type="evidence" value="ECO:0007669"/>
    <property type="project" value="InterPro"/>
</dbReference>
<dbReference type="GO" id="GO:0008855">
    <property type="term" value="F:exodeoxyribonuclease VII activity"/>
    <property type="evidence" value="ECO:0007669"/>
    <property type="project" value="UniProtKB-UniRule"/>
</dbReference>
<dbReference type="GO" id="GO:0006308">
    <property type="term" value="P:DNA catabolic process"/>
    <property type="evidence" value="ECO:0007669"/>
    <property type="project" value="UniProtKB-UniRule"/>
</dbReference>
<dbReference type="Gene3D" id="1.10.287.1040">
    <property type="entry name" value="Exonuclease VII, small subunit"/>
    <property type="match status" value="1"/>
</dbReference>
<dbReference type="HAMAP" id="MF_00337">
    <property type="entry name" value="Exonuc_7_S"/>
    <property type="match status" value="1"/>
</dbReference>
<dbReference type="InterPro" id="IPR003761">
    <property type="entry name" value="Exonuc_VII_S"/>
</dbReference>
<dbReference type="InterPro" id="IPR037004">
    <property type="entry name" value="Exonuc_VII_ssu_sf"/>
</dbReference>
<dbReference type="NCBIfam" id="NF002138">
    <property type="entry name" value="PRK00977.1-2"/>
    <property type="match status" value="1"/>
</dbReference>
<dbReference type="NCBIfam" id="TIGR01280">
    <property type="entry name" value="xseB"/>
    <property type="match status" value="1"/>
</dbReference>
<dbReference type="PANTHER" id="PTHR34137">
    <property type="entry name" value="EXODEOXYRIBONUCLEASE 7 SMALL SUBUNIT"/>
    <property type="match status" value="1"/>
</dbReference>
<dbReference type="PANTHER" id="PTHR34137:SF1">
    <property type="entry name" value="EXODEOXYRIBONUCLEASE 7 SMALL SUBUNIT"/>
    <property type="match status" value="1"/>
</dbReference>
<dbReference type="Pfam" id="PF02609">
    <property type="entry name" value="Exonuc_VII_S"/>
    <property type="match status" value="1"/>
</dbReference>
<dbReference type="PIRSF" id="PIRSF006488">
    <property type="entry name" value="Exonuc_VII_S"/>
    <property type="match status" value="1"/>
</dbReference>
<dbReference type="SUPFAM" id="SSF116842">
    <property type="entry name" value="XseB-like"/>
    <property type="match status" value="1"/>
</dbReference>
<comment type="function">
    <text evidence="1">Bidirectionally degrades single-stranded DNA into large acid-insoluble oligonucleotides, which are then degraded further into small acid-soluble oligonucleotides.</text>
</comment>
<comment type="catalytic activity">
    <reaction evidence="1">
        <text>Exonucleolytic cleavage in either 5'- to 3'- or 3'- to 5'-direction to yield nucleoside 5'-phosphates.</text>
        <dbReference type="EC" id="3.1.11.6"/>
    </reaction>
</comment>
<comment type="subunit">
    <text evidence="1">Heterooligomer composed of large and small subunits.</text>
</comment>
<comment type="subcellular location">
    <subcellularLocation>
        <location evidence="1">Cytoplasm</location>
    </subcellularLocation>
</comment>
<comment type="similarity">
    <text evidence="1">Belongs to the XseB family.</text>
</comment>
<protein>
    <recommendedName>
        <fullName evidence="1">Exodeoxyribonuclease 7 small subunit</fullName>
        <ecNumber evidence="1">3.1.11.6</ecNumber>
    </recommendedName>
    <alternativeName>
        <fullName evidence="1">Exodeoxyribonuclease VII small subunit</fullName>
        <shortName evidence="1">Exonuclease VII small subunit</shortName>
    </alternativeName>
</protein>
<name>EX7S_STRP3</name>
<gene>
    <name evidence="1" type="primary">xseB</name>
    <name type="ordered locus">SpyM3_1155</name>
</gene>
<keyword id="KW-0963">Cytoplasm</keyword>
<keyword id="KW-0269">Exonuclease</keyword>
<keyword id="KW-0378">Hydrolase</keyword>
<keyword id="KW-0540">Nuclease</keyword>
<sequence>MSKTKTFEENLQDLETIVNKLENGDVPLEEAISEFQKGMLLSKELQKTLQAAEKTLVKVMQADGTEVDMDD</sequence>
<organism>
    <name type="scientific">Streptococcus pyogenes serotype M3 (strain ATCC BAA-595 / MGAS315)</name>
    <dbReference type="NCBI Taxonomy" id="198466"/>
    <lineage>
        <taxon>Bacteria</taxon>
        <taxon>Bacillati</taxon>
        <taxon>Bacillota</taxon>
        <taxon>Bacilli</taxon>
        <taxon>Lactobacillales</taxon>
        <taxon>Streptococcaceae</taxon>
        <taxon>Streptococcus</taxon>
    </lineage>
</organism>
<accession>P0DH52</accession>
<accession>P67468</accession>
<accession>Q99YX4</accession>
<feature type="chain" id="PRO_0000207019" description="Exodeoxyribonuclease 7 small subunit">
    <location>
        <begin position="1"/>
        <end position="71"/>
    </location>
</feature>
<proteinExistence type="inferred from homology"/>
<evidence type="ECO:0000255" key="1">
    <source>
        <dbReference type="HAMAP-Rule" id="MF_00337"/>
    </source>
</evidence>
<reference key="1">
    <citation type="journal article" date="2002" name="Proc. Natl. Acad. Sci. U.S.A.">
        <title>Genome sequence of a serotype M3 strain of group A Streptococcus: phage-encoded toxins, the high-virulence phenotype, and clone emergence.</title>
        <authorList>
            <person name="Beres S.B."/>
            <person name="Sylva G.L."/>
            <person name="Barbian K.D."/>
            <person name="Lei B."/>
            <person name="Hoff J.S."/>
            <person name="Mammarella N.D."/>
            <person name="Liu M.-Y."/>
            <person name="Smoot J.C."/>
            <person name="Porcella S.F."/>
            <person name="Parkins L.D."/>
            <person name="Campbell D.S."/>
            <person name="Smith T.M."/>
            <person name="McCormick J.K."/>
            <person name="Leung D.Y.M."/>
            <person name="Schlievert P.M."/>
            <person name="Musser J.M."/>
        </authorList>
    </citation>
    <scope>NUCLEOTIDE SEQUENCE [LARGE SCALE GENOMIC DNA]</scope>
    <source>
        <strain>ATCC BAA-595 / MGAS315</strain>
    </source>
</reference>